<name>MQO_ECOL6</name>
<proteinExistence type="inferred from homology"/>
<reference key="1">
    <citation type="journal article" date="2002" name="Proc. Natl. Acad. Sci. U.S.A.">
        <title>Extensive mosaic structure revealed by the complete genome sequence of uropathogenic Escherichia coli.</title>
        <authorList>
            <person name="Welch R.A."/>
            <person name="Burland V."/>
            <person name="Plunkett G. III"/>
            <person name="Redford P."/>
            <person name="Roesch P."/>
            <person name="Rasko D."/>
            <person name="Buckles E.L."/>
            <person name="Liou S.-R."/>
            <person name="Boutin A."/>
            <person name="Hackett J."/>
            <person name="Stroud D."/>
            <person name="Mayhew G.F."/>
            <person name="Rose D.J."/>
            <person name="Zhou S."/>
            <person name="Schwartz D.C."/>
            <person name="Perna N.T."/>
            <person name="Mobley H.L.T."/>
            <person name="Donnenberg M.S."/>
            <person name="Blattner F.R."/>
        </authorList>
    </citation>
    <scope>NUCLEOTIDE SEQUENCE [LARGE SCALE GENOMIC DNA]</scope>
    <source>
        <strain>CFT073 / ATCC 700928 / UPEC</strain>
    </source>
</reference>
<dbReference type="EC" id="1.1.5.4" evidence="1"/>
<dbReference type="EMBL" id="AE014075">
    <property type="protein sequence ID" value="AAN81205.1"/>
    <property type="molecule type" value="Genomic_DNA"/>
</dbReference>
<dbReference type="RefSeq" id="WP_000758067.1">
    <property type="nucleotide sequence ID" value="NZ_CP051263.1"/>
</dbReference>
<dbReference type="SMR" id="Q8FFQ5"/>
<dbReference type="STRING" id="199310.c2751"/>
<dbReference type="KEGG" id="ecc:c2751"/>
<dbReference type="eggNOG" id="COG0579">
    <property type="taxonomic scope" value="Bacteria"/>
</dbReference>
<dbReference type="HOGENOM" id="CLU_028151_0_0_6"/>
<dbReference type="BioCyc" id="ECOL199310:C2751-MONOMER"/>
<dbReference type="UniPathway" id="UPA00223">
    <property type="reaction ID" value="UER01008"/>
</dbReference>
<dbReference type="Proteomes" id="UP000001410">
    <property type="component" value="Chromosome"/>
</dbReference>
<dbReference type="GO" id="GO:0047545">
    <property type="term" value="F:2-hydroxyglutarate dehydrogenase activity"/>
    <property type="evidence" value="ECO:0007669"/>
    <property type="project" value="TreeGrafter"/>
</dbReference>
<dbReference type="GO" id="GO:0008924">
    <property type="term" value="F:L-malate dehydrogenase (quinone) activity"/>
    <property type="evidence" value="ECO:0007669"/>
    <property type="project" value="UniProtKB-UniRule"/>
</dbReference>
<dbReference type="GO" id="GO:0006099">
    <property type="term" value="P:tricarboxylic acid cycle"/>
    <property type="evidence" value="ECO:0007669"/>
    <property type="project" value="UniProtKB-UniRule"/>
</dbReference>
<dbReference type="Gene3D" id="3.30.9.10">
    <property type="entry name" value="D-Amino Acid Oxidase, subunit A, domain 2"/>
    <property type="match status" value="1"/>
</dbReference>
<dbReference type="Gene3D" id="3.50.50.60">
    <property type="entry name" value="FAD/NAD(P)-binding domain"/>
    <property type="match status" value="1"/>
</dbReference>
<dbReference type="HAMAP" id="MF_00212">
    <property type="entry name" value="MQO"/>
    <property type="match status" value="1"/>
</dbReference>
<dbReference type="InterPro" id="IPR036188">
    <property type="entry name" value="FAD/NAD-bd_sf"/>
</dbReference>
<dbReference type="InterPro" id="IPR006231">
    <property type="entry name" value="MQO"/>
</dbReference>
<dbReference type="NCBIfam" id="TIGR01320">
    <property type="entry name" value="mal_quin_oxido"/>
    <property type="match status" value="1"/>
</dbReference>
<dbReference type="NCBIfam" id="NF003603">
    <property type="entry name" value="PRK05257.1-1"/>
    <property type="match status" value="1"/>
</dbReference>
<dbReference type="NCBIfam" id="NF003605">
    <property type="entry name" value="PRK05257.1-4"/>
    <property type="match status" value="1"/>
</dbReference>
<dbReference type="NCBIfam" id="NF003606">
    <property type="entry name" value="PRK05257.2-1"/>
    <property type="match status" value="1"/>
</dbReference>
<dbReference type="NCBIfam" id="NF003608">
    <property type="entry name" value="PRK05257.2-4"/>
    <property type="match status" value="1"/>
</dbReference>
<dbReference type="NCBIfam" id="NF003611">
    <property type="entry name" value="PRK05257.3-2"/>
    <property type="match status" value="1"/>
</dbReference>
<dbReference type="NCBIfam" id="NF009875">
    <property type="entry name" value="PRK13339.1"/>
    <property type="match status" value="1"/>
</dbReference>
<dbReference type="PANTHER" id="PTHR43104">
    <property type="entry name" value="L-2-HYDROXYGLUTARATE DEHYDROGENASE, MITOCHONDRIAL"/>
    <property type="match status" value="1"/>
</dbReference>
<dbReference type="PANTHER" id="PTHR43104:SF2">
    <property type="entry name" value="L-2-HYDROXYGLUTARATE DEHYDROGENASE, MITOCHONDRIAL"/>
    <property type="match status" value="1"/>
</dbReference>
<dbReference type="Pfam" id="PF06039">
    <property type="entry name" value="Mqo"/>
    <property type="match status" value="1"/>
</dbReference>
<dbReference type="SUPFAM" id="SSF51905">
    <property type="entry name" value="FAD/NAD(P)-binding domain"/>
    <property type="match status" value="1"/>
</dbReference>
<gene>
    <name evidence="1" type="primary">mqo</name>
    <name type="synonym">yojH</name>
    <name type="ordered locus">c2751</name>
</gene>
<protein>
    <recommendedName>
        <fullName evidence="1">Probable malate:quinone oxidoreductase</fullName>
        <ecNumber evidence="1">1.1.5.4</ecNumber>
    </recommendedName>
    <alternativeName>
        <fullName evidence="1">MQO</fullName>
    </alternativeName>
    <alternativeName>
        <fullName evidence="1">Malate dehydrogenase [quinone]</fullName>
    </alternativeName>
</protein>
<feature type="chain" id="PRO_0000128713" description="Probable malate:quinone oxidoreductase">
    <location>
        <begin position="1"/>
        <end position="548"/>
    </location>
</feature>
<keyword id="KW-0274">FAD</keyword>
<keyword id="KW-0285">Flavoprotein</keyword>
<keyword id="KW-0560">Oxidoreductase</keyword>
<keyword id="KW-1185">Reference proteome</keyword>
<keyword id="KW-0816">Tricarboxylic acid cycle</keyword>
<accession>Q8FFQ5</accession>
<organism>
    <name type="scientific">Escherichia coli O6:H1 (strain CFT073 / ATCC 700928 / UPEC)</name>
    <dbReference type="NCBI Taxonomy" id="199310"/>
    <lineage>
        <taxon>Bacteria</taxon>
        <taxon>Pseudomonadati</taxon>
        <taxon>Pseudomonadota</taxon>
        <taxon>Gammaproteobacteria</taxon>
        <taxon>Enterobacterales</taxon>
        <taxon>Enterobacteriaceae</taxon>
        <taxon>Escherichia</taxon>
    </lineage>
</organism>
<evidence type="ECO:0000255" key="1">
    <source>
        <dbReference type="HAMAP-Rule" id="MF_00212"/>
    </source>
</evidence>
<comment type="catalytic activity">
    <reaction evidence="1">
        <text>(S)-malate + a quinone = a quinol + oxaloacetate</text>
        <dbReference type="Rhea" id="RHEA:46012"/>
        <dbReference type="ChEBI" id="CHEBI:15589"/>
        <dbReference type="ChEBI" id="CHEBI:16452"/>
        <dbReference type="ChEBI" id="CHEBI:24646"/>
        <dbReference type="ChEBI" id="CHEBI:132124"/>
        <dbReference type="EC" id="1.1.5.4"/>
    </reaction>
</comment>
<comment type="cofactor">
    <cofactor evidence="1">
        <name>FAD</name>
        <dbReference type="ChEBI" id="CHEBI:57692"/>
    </cofactor>
</comment>
<comment type="pathway">
    <text evidence="1">Carbohydrate metabolism; tricarboxylic acid cycle; oxaloacetate from (S)-malate (quinone route): step 1/1.</text>
</comment>
<comment type="similarity">
    <text evidence="1">Belongs to the MQO family.</text>
</comment>
<sequence>MKKVTAMLFSMAVGLNAVSMAAKAKASEEQETDVLLIGGGIMSATLGTYLRELEPEWSMTMVERLEGVAQESSNGWNNAGTGHSALMELNYTPQNADGSISIEKAVAINEAFQISRQFWAHQVERGVLRTPRSFINTVPHMSFVWGEDNVNFLRARYAALQQSSLFRGMRYSEDHAQIKEWAPLVMEGRDPQQKVAATRTEIGTDVNYGEITRQLIASLQKKSNFSLQLSSEVRALKRNDDNTWTVTVADLKNGTAQNIRAKFVFIGAGGAALKLLQESGIPEAKDYAGFPVGGQFLVSENPDVVNHHLAKVYGKASVGAPPMSVPHIDTRVLDGKRVVLFGPFATFSTKFLKNGSLWDLMSSTTTSNVMPMMHVGLDNFDLVKYLVSQVMLSEEDRFEALKEYYPQAKKEDWRLWQAGQRVQIIKRDADKGGVLRLGTEVVSDQQGTIAALLGASPGASTAAPIMLNLLEKVFGDRVSSPQWQATLKAIVPSYGRKLNGDVAATERELQYTSEVLGLKYDKPQAVDSTPKPQLKPQLVQKEVADIAL</sequence>